<keyword id="KW-0004">4Fe-4S</keyword>
<keyword id="KW-0028">Amino-acid biosynthesis</keyword>
<keyword id="KW-0100">Branched-chain amino acid biosynthesis</keyword>
<keyword id="KW-0408">Iron</keyword>
<keyword id="KW-0411">Iron-sulfur</keyword>
<keyword id="KW-0432">Leucine biosynthesis</keyword>
<keyword id="KW-0456">Lyase</keyword>
<keyword id="KW-0479">Metal-binding</keyword>
<comment type="function">
    <text evidence="1">Catalyzes the isomerization between 2-isopropylmalate and 3-isopropylmalate, via the formation of 2-isopropylmaleate.</text>
</comment>
<comment type="catalytic activity">
    <reaction evidence="1">
        <text>(2R,3S)-3-isopropylmalate = (2S)-2-isopropylmalate</text>
        <dbReference type="Rhea" id="RHEA:32287"/>
        <dbReference type="ChEBI" id="CHEBI:1178"/>
        <dbReference type="ChEBI" id="CHEBI:35121"/>
        <dbReference type="EC" id="4.2.1.33"/>
    </reaction>
</comment>
<comment type="cofactor">
    <cofactor evidence="1">
        <name>[4Fe-4S] cluster</name>
        <dbReference type="ChEBI" id="CHEBI:49883"/>
    </cofactor>
    <text evidence="1">Binds 1 [4Fe-4S] cluster per subunit.</text>
</comment>
<comment type="pathway">
    <text evidence="1">Amino-acid biosynthesis; L-leucine biosynthesis; L-leucine from 3-methyl-2-oxobutanoate: step 2/4.</text>
</comment>
<comment type="subunit">
    <text evidence="1">Heterodimer of LeuC and LeuD.</text>
</comment>
<comment type="similarity">
    <text evidence="1">Belongs to the aconitase/IPM isomerase family. LeuC type 1 subfamily.</text>
</comment>
<sequence>MAQTLYDKLWNTHVVHTEDDGTALLYIDRQLLHEVTSPQAFEGLNVAHRPVWRISANLAVSDHNVPTTDRSHGIADPVSKLQVDTLDANCDAFGITQFKMNDLRQGIVHIIGPEQGATLPGMTIVCGDSHTSTHGAFGALAHGIGTSEVEHVLATQTLLQKKSKNMLVKVEGTLPRGCTAKDIVLAIIGKIGTAGGTGYAIEFGGSTIRALTMEGRMTVCNMAIEAGARAGMVAVDDTTIDYLKGRPFVPTGAEWDQAVEYWREFKSDEGAQFDRVVELNAAEIVPQVTWGTSPEMVTSIDARVPDPEREKDPVKREAMERALAYMALEPNTPMESINVDKIFIGSCTNARIEDIRAAAYVVKKLNRRIAPNVRLAMVVPGSGLVKAQAEREGLDKVFTDAGFEWREPGCSMCLAMNADRLEPGERCASTSNRNFEGRQGAGGRTHLVSPAMAAAAAIEGHFVDIRKLG</sequence>
<organism>
    <name type="scientific">Burkholderia vietnamiensis (strain G4 / LMG 22486)</name>
    <name type="common">Burkholderia cepacia (strain R1808)</name>
    <dbReference type="NCBI Taxonomy" id="269482"/>
    <lineage>
        <taxon>Bacteria</taxon>
        <taxon>Pseudomonadati</taxon>
        <taxon>Pseudomonadota</taxon>
        <taxon>Betaproteobacteria</taxon>
        <taxon>Burkholderiales</taxon>
        <taxon>Burkholderiaceae</taxon>
        <taxon>Burkholderia</taxon>
        <taxon>Burkholderia cepacia complex</taxon>
    </lineage>
</organism>
<proteinExistence type="inferred from homology"/>
<gene>
    <name evidence="1" type="primary">leuC</name>
    <name type="ordered locus">Bcep1808_4454</name>
</gene>
<feature type="chain" id="PRO_1000063543" description="3-isopropylmalate dehydratase large subunit">
    <location>
        <begin position="1"/>
        <end position="469"/>
    </location>
</feature>
<feature type="binding site" evidence="1">
    <location>
        <position position="347"/>
    </location>
    <ligand>
        <name>[4Fe-4S] cluster</name>
        <dbReference type="ChEBI" id="CHEBI:49883"/>
    </ligand>
</feature>
<feature type="binding site" evidence="1">
    <location>
        <position position="410"/>
    </location>
    <ligand>
        <name>[4Fe-4S] cluster</name>
        <dbReference type="ChEBI" id="CHEBI:49883"/>
    </ligand>
</feature>
<feature type="binding site" evidence="1">
    <location>
        <position position="413"/>
    </location>
    <ligand>
        <name>[4Fe-4S] cluster</name>
        <dbReference type="ChEBI" id="CHEBI:49883"/>
    </ligand>
</feature>
<name>LEUC_BURVG</name>
<evidence type="ECO:0000255" key="1">
    <source>
        <dbReference type="HAMAP-Rule" id="MF_01026"/>
    </source>
</evidence>
<reference key="1">
    <citation type="submission" date="2007-03" db="EMBL/GenBank/DDBJ databases">
        <title>Complete sequence of chromosome 2 of Burkholderia vietnamiensis G4.</title>
        <authorList>
            <consortium name="US DOE Joint Genome Institute"/>
            <person name="Copeland A."/>
            <person name="Lucas S."/>
            <person name="Lapidus A."/>
            <person name="Barry K."/>
            <person name="Detter J.C."/>
            <person name="Glavina del Rio T."/>
            <person name="Hammon N."/>
            <person name="Israni S."/>
            <person name="Dalin E."/>
            <person name="Tice H."/>
            <person name="Pitluck S."/>
            <person name="Chain P."/>
            <person name="Malfatti S."/>
            <person name="Shin M."/>
            <person name="Vergez L."/>
            <person name="Schmutz J."/>
            <person name="Larimer F."/>
            <person name="Land M."/>
            <person name="Hauser L."/>
            <person name="Kyrpides N."/>
            <person name="Tiedje J."/>
            <person name="Richardson P."/>
        </authorList>
    </citation>
    <scope>NUCLEOTIDE SEQUENCE [LARGE SCALE GENOMIC DNA]</scope>
    <source>
        <strain>G4 / LMG 22486</strain>
    </source>
</reference>
<dbReference type="EC" id="4.2.1.33" evidence="1"/>
<dbReference type="EMBL" id="CP000615">
    <property type="protein sequence ID" value="ABO57419.1"/>
    <property type="molecule type" value="Genomic_DNA"/>
</dbReference>
<dbReference type="SMR" id="A4JMB6"/>
<dbReference type="KEGG" id="bvi:Bcep1808_4454"/>
<dbReference type="eggNOG" id="COG0065">
    <property type="taxonomic scope" value="Bacteria"/>
</dbReference>
<dbReference type="HOGENOM" id="CLU_006714_3_4_4"/>
<dbReference type="UniPathway" id="UPA00048">
    <property type="reaction ID" value="UER00071"/>
</dbReference>
<dbReference type="Proteomes" id="UP000002287">
    <property type="component" value="Chromosome 2"/>
</dbReference>
<dbReference type="GO" id="GO:0003861">
    <property type="term" value="F:3-isopropylmalate dehydratase activity"/>
    <property type="evidence" value="ECO:0007669"/>
    <property type="project" value="UniProtKB-UniRule"/>
</dbReference>
<dbReference type="GO" id="GO:0051539">
    <property type="term" value="F:4 iron, 4 sulfur cluster binding"/>
    <property type="evidence" value="ECO:0007669"/>
    <property type="project" value="UniProtKB-KW"/>
</dbReference>
<dbReference type="GO" id="GO:0046872">
    <property type="term" value="F:metal ion binding"/>
    <property type="evidence" value="ECO:0007669"/>
    <property type="project" value="UniProtKB-KW"/>
</dbReference>
<dbReference type="GO" id="GO:0009098">
    <property type="term" value="P:L-leucine biosynthetic process"/>
    <property type="evidence" value="ECO:0007669"/>
    <property type="project" value="UniProtKB-UniRule"/>
</dbReference>
<dbReference type="CDD" id="cd01583">
    <property type="entry name" value="IPMI"/>
    <property type="match status" value="1"/>
</dbReference>
<dbReference type="FunFam" id="3.30.499.10:FF:000007">
    <property type="entry name" value="3-isopropylmalate dehydratase large subunit"/>
    <property type="match status" value="1"/>
</dbReference>
<dbReference type="Gene3D" id="3.30.499.10">
    <property type="entry name" value="Aconitase, domain 3"/>
    <property type="match status" value="2"/>
</dbReference>
<dbReference type="HAMAP" id="MF_01026">
    <property type="entry name" value="LeuC_type1"/>
    <property type="match status" value="1"/>
</dbReference>
<dbReference type="InterPro" id="IPR004430">
    <property type="entry name" value="3-IsopropMal_deHydase_lsu"/>
</dbReference>
<dbReference type="InterPro" id="IPR015931">
    <property type="entry name" value="Acnase/IPM_dHydase_lsu_aba_1/3"/>
</dbReference>
<dbReference type="InterPro" id="IPR001030">
    <property type="entry name" value="Acoase/IPM_deHydtase_lsu_aba"/>
</dbReference>
<dbReference type="InterPro" id="IPR018136">
    <property type="entry name" value="Aconitase_4Fe-4S_BS"/>
</dbReference>
<dbReference type="InterPro" id="IPR036008">
    <property type="entry name" value="Aconitase_4Fe-4S_dom"/>
</dbReference>
<dbReference type="InterPro" id="IPR050067">
    <property type="entry name" value="IPM_dehydratase_rel_enz"/>
</dbReference>
<dbReference type="InterPro" id="IPR033941">
    <property type="entry name" value="IPMI_cat"/>
</dbReference>
<dbReference type="NCBIfam" id="TIGR00170">
    <property type="entry name" value="leuC"/>
    <property type="match status" value="1"/>
</dbReference>
<dbReference type="NCBIfam" id="NF004016">
    <property type="entry name" value="PRK05478.1"/>
    <property type="match status" value="1"/>
</dbReference>
<dbReference type="NCBIfam" id="NF009116">
    <property type="entry name" value="PRK12466.1"/>
    <property type="match status" value="1"/>
</dbReference>
<dbReference type="PANTHER" id="PTHR43822:SF9">
    <property type="entry name" value="3-ISOPROPYLMALATE DEHYDRATASE"/>
    <property type="match status" value="1"/>
</dbReference>
<dbReference type="PANTHER" id="PTHR43822">
    <property type="entry name" value="HOMOACONITASE, MITOCHONDRIAL-RELATED"/>
    <property type="match status" value="1"/>
</dbReference>
<dbReference type="Pfam" id="PF00330">
    <property type="entry name" value="Aconitase"/>
    <property type="match status" value="1"/>
</dbReference>
<dbReference type="PRINTS" id="PR00415">
    <property type="entry name" value="ACONITASE"/>
</dbReference>
<dbReference type="SUPFAM" id="SSF53732">
    <property type="entry name" value="Aconitase iron-sulfur domain"/>
    <property type="match status" value="1"/>
</dbReference>
<dbReference type="PROSITE" id="PS00450">
    <property type="entry name" value="ACONITASE_1"/>
    <property type="match status" value="1"/>
</dbReference>
<dbReference type="PROSITE" id="PS01244">
    <property type="entry name" value="ACONITASE_2"/>
    <property type="match status" value="1"/>
</dbReference>
<accession>A4JMB6</accession>
<protein>
    <recommendedName>
        <fullName evidence="1">3-isopropylmalate dehydratase large subunit</fullName>
        <ecNumber evidence="1">4.2.1.33</ecNumber>
    </recommendedName>
    <alternativeName>
        <fullName evidence="1">Alpha-IPM isomerase</fullName>
        <shortName evidence="1">IPMI</shortName>
    </alternativeName>
    <alternativeName>
        <fullName evidence="1">Isopropylmalate isomerase</fullName>
    </alternativeName>
</protein>